<proteinExistence type="inferred from homology"/>
<evidence type="ECO:0000250" key="1"/>
<evidence type="ECO:0000250" key="2">
    <source>
        <dbReference type="UniProtKB" id="P04517"/>
    </source>
</evidence>
<evidence type="ECO:0000250" key="3">
    <source>
        <dbReference type="UniProtKB" id="P09814"/>
    </source>
</evidence>
<evidence type="ECO:0000250" key="4">
    <source>
        <dbReference type="UniProtKB" id="P13529"/>
    </source>
</evidence>
<evidence type="ECO:0000250" key="5">
    <source>
        <dbReference type="UniProtKB" id="P18247"/>
    </source>
</evidence>
<evidence type="ECO:0000250" key="6">
    <source>
        <dbReference type="UniProtKB" id="P21231"/>
    </source>
</evidence>
<evidence type="ECO:0000255" key="7"/>
<evidence type="ECO:0000255" key="8">
    <source>
        <dbReference type="PROSITE-ProRule" id="PRU00539"/>
    </source>
</evidence>
<evidence type="ECO:0000255" key="9">
    <source>
        <dbReference type="PROSITE-ProRule" id="PRU00541"/>
    </source>
</evidence>
<evidence type="ECO:0000255" key="10">
    <source>
        <dbReference type="PROSITE-ProRule" id="PRU00542"/>
    </source>
</evidence>
<evidence type="ECO:0000255" key="11">
    <source>
        <dbReference type="PROSITE-ProRule" id="PRU00766"/>
    </source>
</evidence>
<evidence type="ECO:0000255" key="12">
    <source>
        <dbReference type="PROSITE-ProRule" id="PRU01080"/>
    </source>
</evidence>
<evidence type="ECO:0000255" key="13">
    <source>
        <dbReference type="PROSITE-ProRule" id="PRU01219"/>
    </source>
</evidence>
<evidence type="ECO:0000256" key="14">
    <source>
        <dbReference type="SAM" id="MobiDB-lite"/>
    </source>
</evidence>
<evidence type="ECO:0000305" key="15"/>
<reference key="1">
    <citation type="journal article" date="1995" name="J. Gen. Virol.">
        <title>Characterization of the P1 protein and coding region of the zucchini yellow mosaic virus.</title>
        <authorList>
            <person name="Wisler G.C."/>
            <person name="Purcifull D.E."/>
            <person name="Hiebert E."/>
        </authorList>
    </citation>
    <scope>NUCLEOTIDE SEQUENCE [GENOMIC RNA]</scope>
</reference>
<reference key="2">
    <citation type="journal article" date="2001" name="Virus Res.">
        <title>Potyvirus proteins: a wealth of functions.</title>
        <authorList>
            <person name="Urcuqui-Inchima S."/>
            <person name="Haenni A.L."/>
            <person name="Bernardi F."/>
        </authorList>
    </citation>
    <scope>REVIEW</scope>
</reference>
<accession>Q89330</accession>
<keyword id="KW-0067">ATP-binding</keyword>
<keyword id="KW-0167">Capsid protein</keyword>
<keyword id="KW-0191">Covalent protein-RNA linkage</keyword>
<keyword id="KW-1139">Helical capsid protein</keyword>
<keyword id="KW-0347">Helicase</keyword>
<keyword id="KW-1036">Host cytoplasmic vesicle</keyword>
<keyword id="KW-1048">Host nucleus</keyword>
<keyword id="KW-0945">Host-virus interaction</keyword>
<keyword id="KW-0378">Hydrolase</keyword>
<keyword id="KW-1090">Inhibition of host innate immune response by virus</keyword>
<keyword id="KW-0547">Nucleotide-binding</keyword>
<keyword id="KW-0548">Nucleotidyltransferase</keyword>
<keyword id="KW-0597">Phosphoprotein</keyword>
<keyword id="KW-0645">Protease</keyword>
<keyword id="KW-0688">Ribosomal frameshifting</keyword>
<keyword id="KW-0696">RNA-directed RNA polymerase</keyword>
<keyword id="KW-0720">Serine protease</keyword>
<keyword id="KW-0941">Suppressor of RNA silencing</keyword>
<keyword id="KW-0788">Thiol protease</keyword>
<keyword id="KW-0808">Transferase</keyword>
<keyword id="KW-0899">Viral immunoevasion</keyword>
<keyword id="KW-0693">Viral RNA replication</keyword>
<keyword id="KW-0946">Virion</keyword>
<comment type="function">
    <molecule>Helper component proteinase</molecule>
    <text evidence="2">Required for aphid transmission and also has proteolytic activity. Only cleaves a Gly-Gly dipeptide at its own C-terminus. Interacts with virions and aphid stylets. Acts as a suppressor of RNA-mediated gene silencing, also known as post-transcriptional gene silencing (PTGS), a mechanism of plant viral defense that limits the accumulation of viral RNAs. May have RNA-binding activity.</text>
</comment>
<comment type="function">
    <molecule>Cytoplasmic inclusion protein</molecule>
    <text>Has helicase activity. It may be involved in replication.</text>
</comment>
<comment type="function">
    <molecule>6 kDa protein 1</molecule>
    <text evidence="4">Indispensable for virus replication.</text>
</comment>
<comment type="function">
    <molecule>6 kDa protein 2</molecule>
    <text evidence="3">Indispensable for virus replication.</text>
</comment>
<comment type="function">
    <molecule>Viral genome-linked protein</molecule>
    <text evidence="5">Mediates the cap-independent, EIF4E-dependent translation of viral genomic RNAs (By similarity). Binds to the cap-binding site of host EIF4E and thus interferes with the host EIF4E-dependent mRNA export and translation (By similarity). VPg-RNA directly binds EIF4E and is a template for transcription (By similarity). Also forms trimeric complexes with EIF4E-EIF4G, which are templates for translation (By similarity).</text>
</comment>
<comment type="function">
    <molecule>Nuclear inclusion protein A</molecule>
    <text evidence="2">Has RNA-binding and proteolytic activities.</text>
</comment>
<comment type="function">
    <molecule>Nuclear inclusion protein B</molecule>
    <text>An RNA-dependent RNA polymerase that plays an essential role in the virus replication.</text>
</comment>
<comment type="function">
    <molecule>Capsid protein</molecule>
    <text evidence="2">Involved in aphid transmission, cell-to-cell and systemis movement, encapsidation of the viral RNA and in the regulation of viral RNA amplification.</text>
</comment>
<comment type="catalytic activity">
    <reaction evidence="8">
        <text>RNA(n) + a ribonucleoside 5'-triphosphate = RNA(n+1) + diphosphate</text>
        <dbReference type="Rhea" id="RHEA:21248"/>
        <dbReference type="Rhea" id="RHEA-COMP:14527"/>
        <dbReference type="Rhea" id="RHEA-COMP:17342"/>
        <dbReference type="ChEBI" id="CHEBI:33019"/>
        <dbReference type="ChEBI" id="CHEBI:61557"/>
        <dbReference type="ChEBI" id="CHEBI:140395"/>
        <dbReference type="EC" id="2.7.7.48"/>
    </reaction>
</comment>
<comment type="catalytic activity">
    <reaction evidence="2">
        <text>Hydrolyzes glutaminyl bonds, and activity is further restricted by preferences for the amino acids in P6 - P1' that vary with the species of potyvirus, e.g. Glu-Xaa-Xaa-Tyr-Xaa-Gln-|-(Ser or Gly) for the enzyme from tobacco etch virus. The natural substrate is the viral polyprotein, but other proteins and oligopeptides containing the appropriate consensus sequence are also cleaved.</text>
        <dbReference type="EC" id="3.4.22.44"/>
    </reaction>
</comment>
<comment type="catalytic activity">
    <reaction evidence="2">
        <text>Hydrolyzes a Gly-|-Gly bond at its own C-terminus, commonly in the sequence -Tyr-Xaa-Val-Gly-|-Gly, in the processing of the potyviral polyprotein.</text>
        <dbReference type="EC" id="3.4.22.45"/>
    </reaction>
</comment>
<comment type="subunit">
    <molecule>Viral genome-linked protein</molecule>
    <text evidence="5">Interacts with host eIF4E protein (via cap-binding region); this interaction mediates the translation of the VPg-viral RNA conjugates (By similarity). Part of a complex that comprises VPg, RNA, host EIF4E and EIF4G; this interaction mediates the translation of the VPg-viral RNA conjugates (By similarity).</text>
</comment>
<comment type="subcellular location">
    <molecule>6 kDa protein 1</molecule>
    <subcellularLocation>
        <location>Host cytoplasmic vesicle</location>
    </subcellularLocation>
    <text evidence="4">Probably colocalizes with 6K2-induced vesicles associated with host chloroplasts.</text>
</comment>
<comment type="subcellular location">
    <molecule>6 kDa protein 2</molecule>
    <subcellularLocation>
        <location evidence="3">Host cytoplasmic vesicle</location>
    </subcellularLocation>
    <text evidence="3">6K-induced vesicles associate with host chloroplasts.</text>
</comment>
<comment type="subcellular location">
    <molecule>Viral genome-linked protein</molecule>
    <subcellularLocation>
        <location evidence="6">Host nucleus</location>
    </subcellularLocation>
    <text evidence="6">Binds to host plant eIF4E proteins in the host nucleus.</text>
</comment>
<comment type="subcellular location">
    <molecule>Capsid protein</molecule>
    <subcellularLocation>
        <location evidence="15">Virion</location>
    </subcellularLocation>
</comment>
<comment type="alternative products">
    <event type="ribosomal frameshifting"/>
    <isoform>
        <id>Q89330-1</id>
        <name>Genome polyprotein</name>
        <sequence type="displayed"/>
    </isoform>
    <isoform>
        <id>P0CK14-1</id>
        <name>P3N-PIPO polyprotein</name>
        <sequence type="external"/>
    </isoform>
</comment>
<comment type="domain">
    <molecule>Helper component proteinase</molecule>
    <text>The N-terminus is involved in interaction with stylets. The central part is involved in interaction with virions and the C-terminus is involved in cell-to cell movement of the virus.</text>
</comment>
<comment type="PTM">
    <molecule>Viral genome-linked protein</molecule>
    <text evidence="3">VPg is uridylylated by the polymerase and is covalently attached to the 5'-end of the genomic RNA. This uridylylated form acts as a nucleotide-peptide primer for the polymerase (By similarity).</text>
</comment>
<comment type="PTM">
    <molecule>Genome polyprotein</molecule>
    <text evidence="1">Potyviral RNA is expressed as two polyproteins which undergo post-translational proteolytic processing. Genome polyprotein is processed by NIa-pro, P1 and HC-pro proteinases resulting in the production of at least ten individual proteins. P3N-PIPO polyprotein is cleaved by P1 and HC-pro proteinases resulting in the production of three individual proteins. The P1 proteinase and the HC-pro cleave only their respective C-termini autocatalytically. 6K1 is essential for proper proteolytic separation of P3 from CI (By similarity).</text>
</comment>
<comment type="miscellaneous">
    <molecule>Isoform Genome polyprotein</molecule>
    <text>Produced by conventional translation.</text>
</comment>
<comment type="similarity">
    <text evidence="15">Belongs to the potyviridae genome polyprotein family.</text>
</comment>
<name>POLG_ZYMVR</name>
<sequence length="3083" mass="351161">MAAIMIGSISVPIVESARCATVQTGNRVNIVAPGHVAVCKPQMKSHSYYKHASEKLSKQASESINILNSFFDTDPEMRFRLTRNEMSKVKKGPNGRMILRKPRAQRVLERISFEKIEKGAERQVLPWRVYATVTSIINTFTDERNGIANSSLRSPFYKRSCRKEKKKIVCENVVRSASVNNLCDRVLKIAREKNIPVEMIGKKKNRHTLTFKNFKGSFIGKVSLAHERGQMRHVEMSYEQFGFILQAICRVTNTRCVRDEDIKPGCSGWVLGDDHELTQKFSRLPCLVIRGRDDEGIVNALEPVFFYDDVDHYSSQPEVQFFQGWRRMFDNFKPSSDHVCKVDHGNEECGELAAIFSQALFPVVKLSCQTCREKLSRVSFEEFKDSLAINFTVHKSEWDSLKENPHHDNVLKLIKGATQATQNLKLSSEVMKLVQNHTSTHMKQIQDINRALMKGSLVTQDELDLALKQLLEMTQWFKNHMHLTGEEALKTFRNKRSSKAMINPSLLCDNQLDKNGNFVWGERGYHSKRLFKNFFEEVIPSEGYTKYIVRNFPNGTRKLAIGSLIVPLNLDRARTALLGESIEKEPLTSACVSQQNGNYIHSCCCVTMDDGTPMYSDVKSPTKRHLVIGASGDPKYIDLPASEADRMYIAKEGYCYLNIFLAMLVNVNENEAKDFTKMIRDVLIPMLGQWPSLMDVATAAYILGVFHPETRCAELPRILVDHATQTMHVIDSYGSLTVGYHVLKAGTVNHLIQFASNDLQSEMKHYRVGGTPTQRIKLEEQLIKGIFKPKLMMQLLQDDPYVLILGMVSPTILVHMYRMRHFERGIEMWIKRDHEVGKIFVILEQLTRKVALTEVLVDQLDLISEASPHLLEIMKGCQDNQRAYVPALDLLTVQVEREFSNKELKVNGYPDLQQTLYDMREKIYAKQLHDSWQELSLLEKSCVTVRLKRFSIFTERKLTQQAKDGKRVSSLQFVHECFITTRVHAKSIRDVGMRKFNEALVGTCKFLFTCGFKIFARCYSDIIYLVNVCLIFSLVLQMSNTVRSMISATREEKERALANKADENERTLMHMYHIFSKKQDDAPLYSEFLEHVRNVRPDLEETLLYMAGAEIVTPQAKSAVQVQFEKIIAVVALLTMCFDAERSDAIFKILTKLKTVFGTVGETVRLQGLEDIENLEDDKKLTIDFDINTNEAQSSTTFDVHFDDWWNRQLQQNRTVPHYRTTGKFLEFTRNTAAFVANEIASSNEGEFLVRGAVGSGKSTSLPAHLAKKGKVLLLEPTRPLAENVSRQLAGDPFFQNVTLRMRGLSCFGSSNITVMTSGYAFHYYVNNPHQMMEFDFIIIDECHVTDSATIAFNCALKEYNFAGKLIKVSATPPGRECDFDTQFAVKVKTEDHLSFQAFVGAQRTGSNADMIQHGNNILVYVASYNEVDMLSKLLTERQFSVTKVDGRTMQLGKTTIETHGTSQKPHFIVATNIIENGVTLDVDCVVDFGLKVVAELDSESRCVRYSKKPVNYGERIQRLGRVGRSKPGTALRIGHTEKGIENIPEFIATEAAALSFAYGLSVTTHGVSTNILGKCTVKQMKCALNFELTPFFTTHLIRHDGSMHPLIHEELKQFKLRDSEMVLNKVALPHQFVSQWMTQGDYEHIGVHIQCNENTRIPFYTNGIPDRVYEKIWKCIQENKNDALFGRLSSACSTKVSYTLSTDPAALPRTIAIIDHLLAEEMMKRNHFDMISSAVTGYSFSLAGIADSFRKRYMRDHTAHNIAILQQARAQLLEFDSKNVNINNLSDLEGIGVIKSVVLQSKQEVSNFLGLRGKWDGRKFANDVILAIMTLLGGGWFMWEYFTKKVNEPVRVESKKRRSQKLKFRDAYDRKVGREIFGDDETIGRTFGEAYTKRGKVKGNNSTKGMGRKTRNFVHLYGVEPENYSFIRFVDPLTGHTLDESTHTDISLVQEEFGNIREKFLENDLISRQSIINKPGIQAYFMGKGTAEALKFDFTPHVPSLSCSNSNAHAGYPERENELRQTGTPVKVSLKDVPEKNEHVELESKSIYKGVRDYNGISTIVCQLTNDSDRLKETMYGIGYGPIIITNGHLFRKNNGTILVRSWHGEFTVKNTTTLKVHFIEGKDVVLVRMPKTFPPFKSNASFRAPKREERACLVGTNFQEKSLRSTVSESSMTNPRRTGSYWIHWISTNEGDCGLPMVSTTDGKLIGLHGKASTVSSKNYFVPFTDDFMATHLSKLDDLTWTQHWLWQPSKIAWGLLNLVDEQPGPEFRISNLVKDLFNSGVETQSKRERWVYESCEGNLRAVGSAQSALVTKHVVKGKCPFFEEYLQTHAEASAYFRPLMGEYQPSKLNKEAFKKDFFKYNKPVIVNQLDHDKFLEAVDGVIRMMCDFEFNECRFITDPEEIYSSLNMKAAIGAQYRGKKKEYFEGLDNFDMERLLFQSCERLFNGYKGLWNGSLKAELRPLEKVQANKTRTFTAAPIDTLLGAKVCVDDFNNEFYSKNLKCPWTVGMSKFYGGWDKLMRALPDGWLYCHADGSQFDSSLTPALLNAVLIIRSFYMEDWWVGQEMLENLYAEIVYTPILAPDGTIFKKFRGNNSGQPSTVVDNTLMVVISIYYACIKFGWGYDEIENRLVFFANGDDLILAVKDEDSGLLDNMSASFSELGLNYDFSERTHKREDLWFMSHQAMLVDGMYIPKLERERIVSILEWDRSKEVMHRTEAICAAMIEAWGHTELLHEIRKFYLWFVEKEEVRELAALGKAPYIAETALRKLYTDKGAETSELARYLQALHQDVFFEQRDTVMLQSDTQTKEADAGAAKRDKDEEKEKKKDVASSSANEKTMTATAKDKDVNAGSHGKIVPRLSKITKKMSLPRVKGSVILDIDHLLEYKPDQIELYNTRASHQQFASWFNQVKAEYDLNEQQMGVVMNGFMVWCIENGTSPDINGVWFMMDGDEQVEYPLKPIVENAKPTLRQIMHHFSDAAEAYIEMRNAEAPYMPRYGLLRNLRDRSLARYAFDFYEVNSKTPDRAREAVAQMKAAALSNVSSRLFGLDGNVATNSEDTERHTARDVNRNMHTLLGVNTMQ</sequence>
<dbReference type="EC" id="3.4.-.-" evidence="2"/>
<dbReference type="EC" id="3.4.22.45" evidence="2"/>
<dbReference type="EC" id="3.6.4.-"/>
<dbReference type="EC" id="3.4.22.44"/>
<dbReference type="EC" id="2.7.7.48"/>
<dbReference type="EMBL" id="L29569">
    <property type="protein sequence ID" value="AAA65558.1"/>
    <property type="molecule type" value="Genomic_RNA"/>
</dbReference>
<dbReference type="MEROPS" id="C06.001"/>
<dbReference type="Proteomes" id="UP000008611">
    <property type="component" value="Genome"/>
</dbReference>
<dbReference type="GO" id="GO:0019029">
    <property type="term" value="C:helical viral capsid"/>
    <property type="evidence" value="ECO:0007669"/>
    <property type="project" value="UniProtKB-KW"/>
</dbReference>
<dbReference type="GO" id="GO:0044161">
    <property type="term" value="C:host cell cytoplasmic vesicle"/>
    <property type="evidence" value="ECO:0007669"/>
    <property type="project" value="UniProtKB-SubCell"/>
</dbReference>
<dbReference type="GO" id="GO:0042025">
    <property type="term" value="C:host cell nucleus"/>
    <property type="evidence" value="ECO:0007669"/>
    <property type="project" value="UniProtKB-SubCell"/>
</dbReference>
<dbReference type="GO" id="GO:0005524">
    <property type="term" value="F:ATP binding"/>
    <property type="evidence" value="ECO:0007669"/>
    <property type="project" value="UniProtKB-KW"/>
</dbReference>
<dbReference type="GO" id="GO:0004197">
    <property type="term" value="F:cysteine-type endopeptidase activity"/>
    <property type="evidence" value="ECO:0007669"/>
    <property type="project" value="InterPro"/>
</dbReference>
<dbReference type="GO" id="GO:0004386">
    <property type="term" value="F:helicase activity"/>
    <property type="evidence" value="ECO:0007669"/>
    <property type="project" value="UniProtKB-KW"/>
</dbReference>
<dbReference type="GO" id="GO:0016818">
    <property type="term" value="F:hydrolase activity, acting on acid anhydrides, in phosphorus-containing anhydrides"/>
    <property type="evidence" value="ECO:0007669"/>
    <property type="project" value="InterPro"/>
</dbReference>
<dbReference type="GO" id="GO:0003723">
    <property type="term" value="F:RNA binding"/>
    <property type="evidence" value="ECO:0007669"/>
    <property type="project" value="InterPro"/>
</dbReference>
<dbReference type="GO" id="GO:0003968">
    <property type="term" value="F:RNA-directed RNA polymerase activity"/>
    <property type="evidence" value="ECO:0007669"/>
    <property type="project" value="UniProtKB-KW"/>
</dbReference>
<dbReference type="GO" id="GO:0008236">
    <property type="term" value="F:serine-type peptidase activity"/>
    <property type="evidence" value="ECO:0007669"/>
    <property type="project" value="UniProtKB-KW"/>
</dbReference>
<dbReference type="GO" id="GO:0005198">
    <property type="term" value="F:structural molecule activity"/>
    <property type="evidence" value="ECO:0007669"/>
    <property type="project" value="InterPro"/>
</dbReference>
<dbReference type="GO" id="GO:0006351">
    <property type="term" value="P:DNA-templated transcription"/>
    <property type="evidence" value="ECO:0007669"/>
    <property type="project" value="InterPro"/>
</dbReference>
<dbReference type="GO" id="GO:0006508">
    <property type="term" value="P:proteolysis"/>
    <property type="evidence" value="ECO:0007669"/>
    <property type="project" value="UniProtKB-KW"/>
</dbReference>
<dbReference type="GO" id="GO:0052170">
    <property type="term" value="P:symbiont-mediated suppression of host innate immune response"/>
    <property type="evidence" value="ECO:0007669"/>
    <property type="project" value="UniProtKB-KW"/>
</dbReference>
<dbReference type="GO" id="GO:0039694">
    <property type="term" value="P:viral RNA genome replication"/>
    <property type="evidence" value="ECO:0007669"/>
    <property type="project" value="InterPro"/>
</dbReference>
<dbReference type="GO" id="GO:0075523">
    <property type="term" value="P:viral translational frameshifting"/>
    <property type="evidence" value="ECO:0007669"/>
    <property type="project" value="UniProtKB-KW"/>
</dbReference>
<dbReference type="CDD" id="cd23175">
    <property type="entry name" value="ps-ssRNAv_Potyviridae_RdRp"/>
    <property type="match status" value="1"/>
</dbReference>
<dbReference type="Gene3D" id="3.30.70.270">
    <property type="match status" value="1"/>
</dbReference>
<dbReference type="Gene3D" id="3.90.70.150">
    <property type="entry name" value="Helper component proteinase"/>
    <property type="match status" value="1"/>
</dbReference>
<dbReference type="Gene3D" id="3.40.50.300">
    <property type="entry name" value="P-loop containing nucleotide triphosphate hydrolases"/>
    <property type="match status" value="2"/>
</dbReference>
<dbReference type="Gene3D" id="2.40.10.10">
    <property type="entry name" value="Trypsin-like serine proteases"/>
    <property type="match status" value="2"/>
</dbReference>
<dbReference type="InterPro" id="IPR011545">
    <property type="entry name" value="DEAD/DEAH_box_helicase_dom"/>
</dbReference>
<dbReference type="InterPro" id="IPR043502">
    <property type="entry name" value="DNA/RNA_pol_sf"/>
</dbReference>
<dbReference type="InterPro" id="IPR001456">
    <property type="entry name" value="HC-pro"/>
</dbReference>
<dbReference type="InterPro" id="IPR031159">
    <property type="entry name" value="HC_PRO_CPD_dom"/>
</dbReference>
<dbReference type="InterPro" id="IPR042308">
    <property type="entry name" value="HC_PRO_CPD_sf"/>
</dbReference>
<dbReference type="InterPro" id="IPR014001">
    <property type="entry name" value="Helicase_ATP-bd"/>
</dbReference>
<dbReference type="InterPro" id="IPR001650">
    <property type="entry name" value="Helicase_C-like"/>
</dbReference>
<dbReference type="InterPro" id="IPR027417">
    <property type="entry name" value="P-loop_NTPase"/>
</dbReference>
<dbReference type="InterPro" id="IPR002540">
    <property type="entry name" value="Pept_S30_P1_potyvir"/>
</dbReference>
<dbReference type="InterPro" id="IPR009003">
    <property type="entry name" value="Peptidase_S1_PA"/>
</dbReference>
<dbReference type="InterPro" id="IPR043504">
    <property type="entry name" value="Peptidase_S1_PA_chymotrypsin"/>
</dbReference>
<dbReference type="InterPro" id="IPR001592">
    <property type="entry name" value="Poty_coat"/>
</dbReference>
<dbReference type="InterPro" id="IPR001730">
    <property type="entry name" value="Potyv_NIa-pro_dom"/>
</dbReference>
<dbReference type="InterPro" id="IPR039560">
    <property type="entry name" value="Potyvirid-P3"/>
</dbReference>
<dbReference type="InterPro" id="IPR013648">
    <property type="entry name" value="PP_Potyviridae"/>
</dbReference>
<dbReference type="InterPro" id="IPR043128">
    <property type="entry name" value="Rev_trsase/Diguanyl_cyclase"/>
</dbReference>
<dbReference type="InterPro" id="IPR001205">
    <property type="entry name" value="RNA-dir_pol_C"/>
</dbReference>
<dbReference type="InterPro" id="IPR007094">
    <property type="entry name" value="RNA-dir_pol_PSvirus"/>
</dbReference>
<dbReference type="PANTHER" id="PTHR43519">
    <property type="entry name" value="ATP-DEPENDENT RNA HELICASE HRPB"/>
    <property type="match status" value="1"/>
</dbReference>
<dbReference type="PANTHER" id="PTHR43519:SF1">
    <property type="entry name" value="ATP-DEPENDENT RNA HELICASE HRPB"/>
    <property type="match status" value="1"/>
</dbReference>
<dbReference type="Pfam" id="PF00270">
    <property type="entry name" value="DEAD"/>
    <property type="match status" value="1"/>
</dbReference>
<dbReference type="Pfam" id="PF00271">
    <property type="entry name" value="Helicase_C"/>
    <property type="match status" value="1"/>
</dbReference>
<dbReference type="Pfam" id="PF00863">
    <property type="entry name" value="Peptidase_C4"/>
    <property type="match status" value="1"/>
</dbReference>
<dbReference type="Pfam" id="PF00851">
    <property type="entry name" value="Peptidase_C6"/>
    <property type="match status" value="1"/>
</dbReference>
<dbReference type="Pfam" id="PF01577">
    <property type="entry name" value="Peptidase_S30"/>
    <property type="match status" value="1"/>
</dbReference>
<dbReference type="Pfam" id="PF00767">
    <property type="entry name" value="Poty_coat"/>
    <property type="match status" value="1"/>
</dbReference>
<dbReference type="Pfam" id="PF08440">
    <property type="entry name" value="Poty_PP"/>
    <property type="match status" value="1"/>
</dbReference>
<dbReference type="Pfam" id="PF13608">
    <property type="entry name" value="Potyvirid-P3"/>
    <property type="match status" value="1"/>
</dbReference>
<dbReference type="Pfam" id="PF00680">
    <property type="entry name" value="RdRP_1"/>
    <property type="match status" value="1"/>
</dbReference>
<dbReference type="PRINTS" id="PR00966">
    <property type="entry name" value="NIAPOTYPTASE"/>
</dbReference>
<dbReference type="SMART" id="SM00487">
    <property type="entry name" value="DEXDc"/>
    <property type="match status" value="1"/>
</dbReference>
<dbReference type="SMART" id="SM00490">
    <property type="entry name" value="HELICc"/>
    <property type="match status" value="1"/>
</dbReference>
<dbReference type="SUPFAM" id="SSF56672">
    <property type="entry name" value="DNA/RNA polymerases"/>
    <property type="match status" value="1"/>
</dbReference>
<dbReference type="SUPFAM" id="SSF52540">
    <property type="entry name" value="P-loop containing nucleoside triphosphate hydrolases"/>
    <property type="match status" value="2"/>
</dbReference>
<dbReference type="SUPFAM" id="SSF50494">
    <property type="entry name" value="Trypsin-like serine proteases"/>
    <property type="match status" value="1"/>
</dbReference>
<dbReference type="PROSITE" id="PS51744">
    <property type="entry name" value="HC_PRO_CPD"/>
    <property type="match status" value="1"/>
</dbReference>
<dbReference type="PROSITE" id="PS51192">
    <property type="entry name" value="HELICASE_ATP_BIND_1"/>
    <property type="match status" value="1"/>
</dbReference>
<dbReference type="PROSITE" id="PS51194">
    <property type="entry name" value="HELICASE_CTER"/>
    <property type="match status" value="1"/>
</dbReference>
<dbReference type="PROSITE" id="PS51436">
    <property type="entry name" value="POTYVIRUS_NIA_PRO"/>
    <property type="match status" value="1"/>
</dbReference>
<dbReference type="PROSITE" id="PS51871">
    <property type="entry name" value="PV_P1_PRO"/>
    <property type="match status" value="1"/>
</dbReference>
<dbReference type="PROSITE" id="PS50507">
    <property type="entry name" value="RDRP_SSRNA_POS"/>
    <property type="match status" value="1"/>
</dbReference>
<organism>
    <name type="scientific">Zucchini yellow mosaic virus (strain Reunion Island)</name>
    <name type="common">ZYMV</name>
    <dbReference type="NCBI Taxonomy" id="117129"/>
    <lineage>
        <taxon>Viruses</taxon>
        <taxon>Riboviria</taxon>
        <taxon>Orthornavirae</taxon>
        <taxon>Pisuviricota</taxon>
        <taxon>Stelpaviricetes</taxon>
        <taxon>Patatavirales</taxon>
        <taxon>Potyviridae</taxon>
        <taxon>Potyvirus</taxon>
        <taxon>Potyvirus cucurbitaflavitesselati</taxon>
        <taxon>Zucchini yellow mosaic virus</taxon>
    </lineage>
</organism>
<feature type="chain" id="PRO_0000420036" description="Genome polyprotein">
    <location>
        <begin position="1"/>
        <end position="3083"/>
    </location>
</feature>
<feature type="chain" id="PRO_0000040510" description="P1 proteinase" evidence="7">
    <location>
        <begin position="1"/>
        <end position="313"/>
    </location>
</feature>
<feature type="chain" id="PRO_0000040511" description="Helper component proteinase" evidence="7">
    <location>
        <begin position="314"/>
        <end position="769"/>
    </location>
</feature>
<feature type="chain" id="PRO_0000040512" description="Protein P3" evidence="1">
    <location>
        <begin position="770"/>
        <end position="1115"/>
    </location>
</feature>
<feature type="chain" id="PRO_0000040513" description="6 kDa protein 1" evidence="1">
    <location>
        <begin position="1116"/>
        <end position="1167"/>
    </location>
</feature>
<feature type="chain" id="PRO_0000040514" description="Cytoplasmic inclusion protein" evidence="1">
    <location>
        <begin position="1168"/>
        <end position="1801"/>
    </location>
</feature>
<feature type="chain" id="PRO_0000040515" description="6 kDa protein 2" evidence="1">
    <location>
        <begin position="1802"/>
        <end position="1854"/>
    </location>
</feature>
<feature type="chain" id="PRO_0000040516" description="Viral genome-linked protein" evidence="1">
    <location>
        <begin position="1855"/>
        <end position="2044"/>
    </location>
</feature>
<feature type="chain" id="PRO_0000040517" description="Nuclear inclusion protein A" evidence="1">
    <location>
        <begin position="2045"/>
        <end position="2287"/>
    </location>
</feature>
<feature type="chain" id="PRO_0000040518" description="Nuclear inclusion protein B" evidence="1">
    <location>
        <begin position="2288"/>
        <end position="2804"/>
    </location>
</feature>
<feature type="chain" id="PRO_0000040519" description="Capsid protein" evidence="1">
    <location>
        <begin position="2805"/>
        <end position="3083"/>
    </location>
</feature>
<feature type="domain" description="Peptidase S30" evidence="13">
    <location>
        <begin position="173"/>
        <end position="313"/>
    </location>
</feature>
<feature type="domain" description="Peptidase C6" evidence="12">
    <location>
        <begin position="647"/>
        <end position="769"/>
    </location>
</feature>
<feature type="domain" description="Helicase ATP-binding" evidence="9">
    <location>
        <begin position="1239"/>
        <end position="1391"/>
    </location>
</feature>
<feature type="domain" description="Helicase C-terminal" evidence="10">
    <location>
        <begin position="1410"/>
        <end position="1569"/>
    </location>
</feature>
<feature type="domain" description="Peptidase C4" evidence="11">
    <location>
        <begin position="2045"/>
        <end position="2263"/>
    </location>
</feature>
<feature type="domain" description="RdRp catalytic" evidence="8">
    <location>
        <begin position="2529"/>
        <end position="2653"/>
    </location>
</feature>
<feature type="region of interest" description="Disordered" evidence="14">
    <location>
        <begin position="2805"/>
        <end position="2854"/>
    </location>
</feature>
<feature type="short sequence motif" description="Involved in interaction with stylet and aphid transmission" evidence="1">
    <location>
        <begin position="365"/>
        <end position="368"/>
    </location>
</feature>
<feature type="short sequence motif" description="Involved in virions binding and aphid transmission" evidence="1">
    <location>
        <begin position="621"/>
        <end position="623"/>
    </location>
</feature>
<feature type="short sequence motif" description="DECH box">
    <location>
        <begin position="1341"/>
        <end position="1344"/>
    </location>
</feature>
<feature type="short sequence motif" description="Nuclear localization signal" evidence="7">
    <location>
        <begin position="1894"/>
        <end position="1903"/>
    </location>
</feature>
<feature type="compositionally biased region" description="Basic and acidic residues" evidence="14">
    <location>
        <begin position="2808"/>
        <end position="2831"/>
    </location>
</feature>
<feature type="compositionally biased region" description="Polar residues" evidence="14">
    <location>
        <begin position="2832"/>
        <end position="2843"/>
    </location>
</feature>
<feature type="active site" description="For P1 proteinase activity" evidence="13">
    <location>
        <position position="226"/>
    </location>
</feature>
<feature type="active site" description="For P1 proteinase activity" evidence="13">
    <location>
        <position position="235"/>
    </location>
</feature>
<feature type="active site" description="For P1 proteinase activity" evidence="13">
    <location>
        <position position="267"/>
    </location>
</feature>
<feature type="active site" description="For helper component proteinase activity" evidence="12">
    <location>
        <position position="655"/>
    </location>
</feature>
<feature type="active site" description="For helper component proteinase activity" evidence="12">
    <location>
        <position position="728"/>
    </location>
</feature>
<feature type="active site" description="For nuclear inclusion protein A activity" evidence="11">
    <location>
        <position position="2090"/>
    </location>
</feature>
<feature type="active site" description="For nuclear inclusion protein A activity" evidence="11">
    <location>
        <position position="2125"/>
    </location>
</feature>
<feature type="active site" description="For nuclear inclusion protein A activity" evidence="11">
    <location>
        <position position="2195"/>
    </location>
</feature>
<feature type="binding site" evidence="9">
    <location>
        <begin position="1252"/>
        <end position="1259"/>
    </location>
    <ligand>
        <name>ATP</name>
        <dbReference type="ChEBI" id="CHEBI:30616"/>
    </ligand>
</feature>
<feature type="site" description="Cleavage; by P1 proteinase" evidence="13">
    <location>
        <begin position="313"/>
        <end position="314"/>
    </location>
</feature>
<feature type="site" description="Cleavage; by autolysis" evidence="12">
    <location>
        <begin position="769"/>
        <end position="770"/>
    </location>
</feature>
<feature type="site" description="Cleavage; by NIa-pro" evidence="1">
    <location>
        <begin position="1115"/>
        <end position="1116"/>
    </location>
</feature>
<feature type="site" description="Cleavage; by NIa-pro" evidence="1">
    <location>
        <begin position="1167"/>
        <end position="1168"/>
    </location>
</feature>
<feature type="site" description="Cleavage; by NIa-pro" evidence="1">
    <location>
        <begin position="1801"/>
        <end position="1802"/>
    </location>
</feature>
<feature type="site" description="Cleavage; by NIa-pro" evidence="1">
    <location>
        <begin position="2044"/>
        <end position="2045"/>
    </location>
</feature>
<feature type="site" description="Cleavage; by NIa-pro" evidence="1">
    <location>
        <begin position="2287"/>
        <end position="2288"/>
    </location>
</feature>
<feature type="site" description="Cleavage; by NIa-pro" evidence="1">
    <location>
        <begin position="2804"/>
        <end position="2805"/>
    </location>
</feature>
<feature type="modified residue" description="O-(5'-phospho-RNA)-tyrosine" evidence="3">
    <location>
        <position position="1918"/>
    </location>
</feature>
<organismHost>
    <name type="scientific">Citrullus lanatus</name>
    <name type="common">Watermelon</name>
    <name type="synonym">Citrullus vulgaris</name>
    <dbReference type="NCBI Taxonomy" id="3654"/>
</organismHost>
<organismHost>
    <name type="scientific">Cucumis melo</name>
    <name type="common">Muskmelon</name>
    <dbReference type="NCBI Taxonomy" id="3656"/>
</organismHost>
<organismHost>
    <name type="scientific">Cucumis sativus</name>
    <name type="common">Cucumber</name>
    <dbReference type="NCBI Taxonomy" id="3659"/>
</organismHost>
<organismHost>
    <name type="scientific">Cucurbita pepo</name>
    <name type="common">Vegetable marrow</name>
    <name type="synonym">Summer squash</name>
    <dbReference type="NCBI Taxonomy" id="3663"/>
</organismHost>
<protein>
    <recommendedName>
        <fullName>Genome polyprotein</fullName>
    </recommendedName>
    <component>
        <recommendedName>
            <fullName>P1 proteinase</fullName>
            <ecNumber evidence="2">3.4.-.-</ecNumber>
        </recommendedName>
        <alternativeName>
            <fullName>N-terminal protein</fullName>
        </alternativeName>
    </component>
    <component>
        <recommendedName>
            <fullName>Helper component proteinase</fullName>
            <shortName>HC-pro</shortName>
            <ecNumber evidence="2">3.4.22.45</ecNumber>
        </recommendedName>
    </component>
    <component>
        <recommendedName>
            <fullName>Protein P3</fullName>
        </recommendedName>
    </component>
    <component>
        <recommendedName>
            <fullName>6 kDa protein 1</fullName>
            <shortName>6K1</shortName>
        </recommendedName>
    </component>
    <component>
        <recommendedName>
            <fullName>Cytoplasmic inclusion protein</fullName>
            <shortName>CI</shortName>
            <ecNumber>3.6.4.-</ecNumber>
        </recommendedName>
    </component>
    <component>
        <recommendedName>
            <fullName>6 kDa protein 2</fullName>
            <shortName>6K2</shortName>
        </recommendedName>
    </component>
    <component>
        <recommendedName>
            <fullName>Viral genome-linked protein</fullName>
        </recommendedName>
        <alternativeName>
            <fullName>VPg</fullName>
        </alternativeName>
    </component>
    <component>
        <recommendedName>
            <fullName>Nuclear inclusion protein A</fullName>
            <shortName>NI-a</shortName>
            <shortName>NIa</shortName>
            <ecNumber>3.4.22.44</ecNumber>
        </recommendedName>
        <alternativeName>
            <fullName>49 kDa proteinase</fullName>
            <shortName>49 kDa-Pro</shortName>
        </alternativeName>
        <alternativeName>
            <fullName>NIa-pro</fullName>
        </alternativeName>
    </component>
    <component>
        <recommendedName>
            <fullName>Nuclear inclusion protein B</fullName>
            <shortName>NI-b</shortName>
            <shortName>NIb</shortName>
            <ecNumber>2.7.7.48</ecNumber>
        </recommendedName>
        <alternativeName>
            <fullName>RNA-directed RNA polymerase</fullName>
        </alternativeName>
    </component>
    <component>
        <recommendedName>
            <fullName>Capsid protein</fullName>
            <shortName>CP</shortName>
        </recommendedName>
        <alternativeName>
            <fullName>Coat protein</fullName>
        </alternativeName>
    </component>
</protein>